<comment type="function">
    <text evidence="1">Allows the formation of correctly charged Asn-tRNA(Asn) or Gln-tRNA(Gln) through the transamidation of misacylated Asp-tRNA(Asn) or Glu-tRNA(Gln) in organisms which lack either or both of asparaginyl-tRNA or glutaminyl-tRNA synthetases. The reaction takes place in the presence of glutamine and ATP through an activated phospho-Asp-tRNA(Asn) or phospho-Glu-tRNA(Gln).</text>
</comment>
<comment type="catalytic activity">
    <reaction evidence="1">
        <text>L-glutamyl-tRNA(Gln) + L-glutamine + ATP + H2O = L-glutaminyl-tRNA(Gln) + L-glutamate + ADP + phosphate + H(+)</text>
        <dbReference type="Rhea" id="RHEA:17521"/>
        <dbReference type="Rhea" id="RHEA-COMP:9681"/>
        <dbReference type="Rhea" id="RHEA-COMP:9684"/>
        <dbReference type="ChEBI" id="CHEBI:15377"/>
        <dbReference type="ChEBI" id="CHEBI:15378"/>
        <dbReference type="ChEBI" id="CHEBI:29985"/>
        <dbReference type="ChEBI" id="CHEBI:30616"/>
        <dbReference type="ChEBI" id="CHEBI:43474"/>
        <dbReference type="ChEBI" id="CHEBI:58359"/>
        <dbReference type="ChEBI" id="CHEBI:78520"/>
        <dbReference type="ChEBI" id="CHEBI:78521"/>
        <dbReference type="ChEBI" id="CHEBI:456216"/>
    </reaction>
</comment>
<comment type="catalytic activity">
    <reaction evidence="1">
        <text>L-aspartyl-tRNA(Asn) + L-glutamine + ATP + H2O = L-asparaginyl-tRNA(Asn) + L-glutamate + ADP + phosphate + 2 H(+)</text>
        <dbReference type="Rhea" id="RHEA:14513"/>
        <dbReference type="Rhea" id="RHEA-COMP:9674"/>
        <dbReference type="Rhea" id="RHEA-COMP:9677"/>
        <dbReference type="ChEBI" id="CHEBI:15377"/>
        <dbReference type="ChEBI" id="CHEBI:15378"/>
        <dbReference type="ChEBI" id="CHEBI:29985"/>
        <dbReference type="ChEBI" id="CHEBI:30616"/>
        <dbReference type="ChEBI" id="CHEBI:43474"/>
        <dbReference type="ChEBI" id="CHEBI:58359"/>
        <dbReference type="ChEBI" id="CHEBI:78515"/>
        <dbReference type="ChEBI" id="CHEBI:78516"/>
        <dbReference type="ChEBI" id="CHEBI:456216"/>
    </reaction>
</comment>
<comment type="subunit">
    <text evidence="1">Heterotrimer of A, B and C subunits.</text>
</comment>
<comment type="similarity">
    <text evidence="1">Belongs to the GatB/GatE family. GatB subfamily.</text>
</comment>
<keyword id="KW-0067">ATP-binding</keyword>
<keyword id="KW-0436">Ligase</keyword>
<keyword id="KW-0547">Nucleotide-binding</keyword>
<keyword id="KW-0648">Protein biosynthesis</keyword>
<keyword id="KW-1185">Reference proteome</keyword>
<dbReference type="EC" id="6.3.5.-" evidence="1"/>
<dbReference type="EMBL" id="CP000830">
    <property type="protein sequence ID" value="ABV92949.1"/>
    <property type="molecule type" value="Genomic_DNA"/>
</dbReference>
<dbReference type="RefSeq" id="WP_012177879.1">
    <property type="nucleotide sequence ID" value="NC_009952.1"/>
</dbReference>
<dbReference type="SMR" id="A8LI95"/>
<dbReference type="STRING" id="398580.Dshi_1207"/>
<dbReference type="KEGG" id="dsh:Dshi_1207"/>
<dbReference type="eggNOG" id="COG0064">
    <property type="taxonomic scope" value="Bacteria"/>
</dbReference>
<dbReference type="HOGENOM" id="CLU_019240_0_0_5"/>
<dbReference type="OrthoDB" id="9804078at2"/>
<dbReference type="Proteomes" id="UP000006833">
    <property type="component" value="Chromosome"/>
</dbReference>
<dbReference type="GO" id="GO:0050566">
    <property type="term" value="F:asparaginyl-tRNA synthase (glutamine-hydrolyzing) activity"/>
    <property type="evidence" value="ECO:0007669"/>
    <property type="project" value="RHEA"/>
</dbReference>
<dbReference type="GO" id="GO:0005524">
    <property type="term" value="F:ATP binding"/>
    <property type="evidence" value="ECO:0007669"/>
    <property type="project" value="UniProtKB-KW"/>
</dbReference>
<dbReference type="GO" id="GO:0050567">
    <property type="term" value="F:glutaminyl-tRNA synthase (glutamine-hydrolyzing) activity"/>
    <property type="evidence" value="ECO:0007669"/>
    <property type="project" value="UniProtKB-UniRule"/>
</dbReference>
<dbReference type="GO" id="GO:0070681">
    <property type="term" value="P:glutaminyl-tRNAGln biosynthesis via transamidation"/>
    <property type="evidence" value="ECO:0007669"/>
    <property type="project" value="TreeGrafter"/>
</dbReference>
<dbReference type="GO" id="GO:0006412">
    <property type="term" value="P:translation"/>
    <property type="evidence" value="ECO:0007669"/>
    <property type="project" value="UniProtKB-UniRule"/>
</dbReference>
<dbReference type="FunFam" id="1.10.10.410:FF:000001">
    <property type="entry name" value="Aspartyl/glutamyl-tRNA(Asn/Gln) amidotransferase subunit B"/>
    <property type="match status" value="1"/>
</dbReference>
<dbReference type="FunFam" id="1.10.150.380:FF:000001">
    <property type="entry name" value="Aspartyl/glutamyl-tRNA(Asn/Gln) amidotransferase subunit B"/>
    <property type="match status" value="1"/>
</dbReference>
<dbReference type="Gene3D" id="1.10.10.410">
    <property type="match status" value="1"/>
</dbReference>
<dbReference type="Gene3D" id="1.10.150.380">
    <property type="entry name" value="GatB domain, N-terminal subdomain"/>
    <property type="match status" value="1"/>
</dbReference>
<dbReference type="HAMAP" id="MF_00121">
    <property type="entry name" value="GatB"/>
    <property type="match status" value="1"/>
</dbReference>
<dbReference type="InterPro" id="IPR017959">
    <property type="entry name" value="Asn/Gln-tRNA_amidoTrfase_suB/E"/>
</dbReference>
<dbReference type="InterPro" id="IPR006075">
    <property type="entry name" value="Asn/Gln-tRNA_Trfase_suB/E_cat"/>
</dbReference>
<dbReference type="InterPro" id="IPR018027">
    <property type="entry name" value="Asn/Gln_amidotransferase"/>
</dbReference>
<dbReference type="InterPro" id="IPR003789">
    <property type="entry name" value="Asn/Gln_tRNA_amidoTrase-B-like"/>
</dbReference>
<dbReference type="InterPro" id="IPR004413">
    <property type="entry name" value="GatB"/>
</dbReference>
<dbReference type="InterPro" id="IPR042114">
    <property type="entry name" value="GatB_C_1"/>
</dbReference>
<dbReference type="InterPro" id="IPR023168">
    <property type="entry name" value="GatB_Yqey_C_2"/>
</dbReference>
<dbReference type="InterPro" id="IPR017958">
    <property type="entry name" value="Gln-tRNA_amidoTrfase_suB_CS"/>
</dbReference>
<dbReference type="InterPro" id="IPR014746">
    <property type="entry name" value="Gln_synth/guanido_kin_cat_dom"/>
</dbReference>
<dbReference type="NCBIfam" id="TIGR00133">
    <property type="entry name" value="gatB"/>
    <property type="match status" value="1"/>
</dbReference>
<dbReference type="NCBIfam" id="NF004012">
    <property type="entry name" value="PRK05477.1-2"/>
    <property type="match status" value="1"/>
</dbReference>
<dbReference type="NCBIfam" id="NF004014">
    <property type="entry name" value="PRK05477.1-4"/>
    <property type="match status" value="1"/>
</dbReference>
<dbReference type="NCBIfam" id="NF004015">
    <property type="entry name" value="PRK05477.1-5"/>
    <property type="match status" value="1"/>
</dbReference>
<dbReference type="PANTHER" id="PTHR11659">
    <property type="entry name" value="GLUTAMYL-TRNA GLN AMIDOTRANSFERASE SUBUNIT B MITOCHONDRIAL AND PROKARYOTIC PET112-RELATED"/>
    <property type="match status" value="1"/>
</dbReference>
<dbReference type="PANTHER" id="PTHR11659:SF0">
    <property type="entry name" value="GLUTAMYL-TRNA(GLN) AMIDOTRANSFERASE SUBUNIT B, MITOCHONDRIAL"/>
    <property type="match status" value="1"/>
</dbReference>
<dbReference type="Pfam" id="PF02934">
    <property type="entry name" value="GatB_N"/>
    <property type="match status" value="1"/>
</dbReference>
<dbReference type="Pfam" id="PF02637">
    <property type="entry name" value="GatB_Yqey"/>
    <property type="match status" value="1"/>
</dbReference>
<dbReference type="SMART" id="SM00845">
    <property type="entry name" value="GatB_Yqey"/>
    <property type="match status" value="1"/>
</dbReference>
<dbReference type="SUPFAM" id="SSF89095">
    <property type="entry name" value="GatB/YqeY motif"/>
    <property type="match status" value="1"/>
</dbReference>
<dbReference type="SUPFAM" id="SSF55931">
    <property type="entry name" value="Glutamine synthetase/guanido kinase"/>
    <property type="match status" value="1"/>
</dbReference>
<dbReference type="PROSITE" id="PS01234">
    <property type="entry name" value="GATB"/>
    <property type="match status" value="1"/>
</dbReference>
<name>GATB_DINSH</name>
<gene>
    <name evidence="1" type="primary">gatB</name>
    <name type="ordered locus">Dshi_1207</name>
</gene>
<organism>
    <name type="scientific">Dinoroseobacter shibae (strain DSM 16493 / NCIMB 14021 / DFL 12)</name>
    <dbReference type="NCBI Taxonomy" id="398580"/>
    <lineage>
        <taxon>Bacteria</taxon>
        <taxon>Pseudomonadati</taxon>
        <taxon>Pseudomonadota</taxon>
        <taxon>Alphaproteobacteria</taxon>
        <taxon>Rhodobacterales</taxon>
        <taxon>Roseobacteraceae</taxon>
        <taxon>Dinoroseobacter</taxon>
    </lineage>
</organism>
<reference key="1">
    <citation type="journal article" date="2010" name="ISME J.">
        <title>The complete genome sequence of the algal symbiont Dinoroseobacter shibae: a hitchhiker's guide to life in the sea.</title>
        <authorList>
            <person name="Wagner-Dobler I."/>
            <person name="Ballhausen B."/>
            <person name="Berger M."/>
            <person name="Brinkhoff T."/>
            <person name="Buchholz I."/>
            <person name="Bunk B."/>
            <person name="Cypionka H."/>
            <person name="Daniel R."/>
            <person name="Drepper T."/>
            <person name="Gerdts G."/>
            <person name="Hahnke S."/>
            <person name="Han C."/>
            <person name="Jahn D."/>
            <person name="Kalhoefer D."/>
            <person name="Kiss H."/>
            <person name="Klenk H.P."/>
            <person name="Kyrpides N."/>
            <person name="Liebl W."/>
            <person name="Liesegang H."/>
            <person name="Meincke L."/>
            <person name="Pati A."/>
            <person name="Petersen J."/>
            <person name="Piekarski T."/>
            <person name="Pommerenke C."/>
            <person name="Pradella S."/>
            <person name="Pukall R."/>
            <person name="Rabus R."/>
            <person name="Stackebrandt E."/>
            <person name="Thole S."/>
            <person name="Thompson L."/>
            <person name="Tielen P."/>
            <person name="Tomasch J."/>
            <person name="von Jan M."/>
            <person name="Wanphrut N."/>
            <person name="Wichels A."/>
            <person name="Zech H."/>
            <person name="Simon M."/>
        </authorList>
    </citation>
    <scope>NUCLEOTIDE SEQUENCE [LARGE SCALE GENOMIC DNA]</scope>
    <source>
        <strain>DSM 16493 / NCIMB 14021 / DFL 12</strain>
    </source>
</reference>
<accession>A8LI95</accession>
<evidence type="ECO:0000255" key="1">
    <source>
        <dbReference type="HAMAP-Rule" id="MF_00121"/>
    </source>
</evidence>
<feature type="chain" id="PRO_1000076159" description="Aspartyl/glutamyl-tRNA(Asn/Gln) amidotransferase subunit B">
    <location>
        <begin position="1"/>
        <end position="505"/>
    </location>
</feature>
<sequence length="505" mass="55099">MLDLTYETPKPKVIAGAREDWELVIGLEVHAQVATNAKLFSGASTLFGAEPNSNVAFVDAGMPGMLPVINEECVAQAVRTGLGLKAAINLTSAFDRKNYFYPDLPQGYQISQLYHPIVGEGEVLVELGDGTARVVRIERIHLEQDAGKSIHDMDPHMSFVDLNRTGVALMEIVSRPDIRGPEEAAAYVSKLRQIMRYLGTCDGNMQNGNLRADVNVSVCRPGDYEKYQASQDFSHLGTRCEIKNMNSLRFIQQAIEYEARRQIAIIEDGGSVTQETRLYDPDKGETRSMRSKEEAHDYRYFPDPDLLPLEIEQAWVDDIAAALPELPDAKKARFITEFGLSDYDASVLTADTTNAAYFEAVAGEAGDGKLAANWVINELFGRLKKEDHDITESPVSPAQLAGIIKLIKADAISGKIAKDLFEIVYTEGGDPAEIVEARGMKQVTDTGAIEAAVDEIIAANPAQVAKAQENPKLAGWFVGQVMKATGGKANPKAVNQIVAAKLAQQ</sequence>
<proteinExistence type="inferred from homology"/>
<protein>
    <recommendedName>
        <fullName evidence="1">Aspartyl/glutamyl-tRNA(Asn/Gln) amidotransferase subunit B</fullName>
        <shortName evidence="1">Asp/Glu-ADT subunit B</shortName>
        <ecNumber evidence="1">6.3.5.-</ecNumber>
    </recommendedName>
</protein>